<organism>
    <name type="scientific">Streptomyces coelicolor (strain ATCC BAA-471 / A3(2) / M145)</name>
    <dbReference type="NCBI Taxonomy" id="100226"/>
    <lineage>
        <taxon>Bacteria</taxon>
        <taxon>Bacillati</taxon>
        <taxon>Actinomycetota</taxon>
        <taxon>Actinomycetes</taxon>
        <taxon>Kitasatosporales</taxon>
        <taxon>Streptomycetaceae</taxon>
        <taxon>Streptomyces</taxon>
        <taxon>Streptomyces albidoflavus group</taxon>
    </lineage>
</organism>
<feature type="chain" id="PRO_0000138892" description="Protease HtpX homolog 1">
    <location>
        <begin position="1"/>
        <end position="304"/>
    </location>
</feature>
<feature type="transmembrane region" description="Helical" evidence="1">
    <location>
        <begin position="17"/>
        <end position="37"/>
    </location>
</feature>
<feature type="transmembrane region" description="Helical" evidence="1">
    <location>
        <begin position="39"/>
        <end position="59"/>
    </location>
</feature>
<feature type="transmembrane region" description="Helical" evidence="1">
    <location>
        <begin position="151"/>
        <end position="171"/>
    </location>
</feature>
<feature type="transmembrane region" description="Helical" evidence="1">
    <location>
        <begin position="186"/>
        <end position="206"/>
    </location>
</feature>
<feature type="active site" evidence="1">
    <location>
        <position position="141"/>
    </location>
</feature>
<feature type="binding site" evidence="1">
    <location>
        <position position="140"/>
    </location>
    <ligand>
        <name>Zn(2+)</name>
        <dbReference type="ChEBI" id="CHEBI:29105"/>
        <note>catalytic</note>
    </ligand>
</feature>
<feature type="binding site" evidence="1">
    <location>
        <position position="144"/>
    </location>
    <ligand>
        <name>Zn(2+)</name>
        <dbReference type="ChEBI" id="CHEBI:29105"/>
        <note>catalytic</note>
    </ligand>
</feature>
<feature type="binding site" evidence="1">
    <location>
        <position position="214"/>
    </location>
    <ligand>
        <name>Zn(2+)</name>
        <dbReference type="ChEBI" id="CHEBI:29105"/>
        <note>catalytic</note>
    </ligand>
</feature>
<keyword id="KW-1003">Cell membrane</keyword>
<keyword id="KW-0378">Hydrolase</keyword>
<keyword id="KW-0472">Membrane</keyword>
<keyword id="KW-0479">Metal-binding</keyword>
<keyword id="KW-0482">Metalloprotease</keyword>
<keyword id="KW-0645">Protease</keyword>
<keyword id="KW-1185">Reference proteome</keyword>
<keyword id="KW-0812">Transmembrane</keyword>
<keyword id="KW-1133">Transmembrane helix</keyword>
<keyword id="KW-0862">Zinc</keyword>
<accession>Q9RKN3</accession>
<name>HTPX1_STRCO</name>
<dbReference type="EC" id="3.4.24.-" evidence="1"/>
<dbReference type="EMBL" id="AL121850">
    <property type="protein sequence ID" value="CAB58284.1"/>
    <property type="molecule type" value="Genomic_DNA"/>
</dbReference>
<dbReference type="EMBL" id="AL939111">
    <property type="protein sequence ID" value="CAB90849.1"/>
    <property type="molecule type" value="Genomic_DNA"/>
</dbReference>
<dbReference type="RefSeq" id="NP_626454.1">
    <property type="nucleotide sequence ID" value="NC_003888.3"/>
</dbReference>
<dbReference type="SMR" id="Q9RKN3"/>
<dbReference type="STRING" id="100226.gene:17759799"/>
<dbReference type="MEROPS" id="M48.004"/>
<dbReference type="PaxDb" id="100226-SCO2202"/>
<dbReference type="KEGG" id="sco:SCO2202"/>
<dbReference type="PATRIC" id="fig|100226.15.peg.2240"/>
<dbReference type="eggNOG" id="COG0501">
    <property type="taxonomic scope" value="Bacteria"/>
</dbReference>
<dbReference type="HOGENOM" id="CLU_042266_0_2_11"/>
<dbReference type="InParanoid" id="Q9RKN3"/>
<dbReference type="OrthoDB" id="15218at2"/>
<dbReference type="PhylomeDB" id="Q9RKN3"/>
<dbReference type="Proteomes" id="UP000001973">
    <property type="component" value="Chromosome"/>
</dbReference>
<dbReference type="GO" id="GO:0005886">
    <property type="term" value="C:plasma membrane"/>
    <property type="evidence" value="ECO:0007669"/>
    <property type="project" value="UniProtKB-SubCell"/>
</dbReference>
<dbReference type="GO" id="GO:0004222">
    <property type="term" value="F:metalloendopeptidase activity"/>
    <property type="evidence" value="ECO:0007669"/>
    <property type="project" value="UniProtKB-UniRule"/>
</dbReference>
<dbReference type="GO" id="GO:0008270">
    <property type="term" value="F:zinc ion binding"/>
    <property type="evidence" value="ECO:0007669"/>
    <property type="project" value="UniProtKB-UniRule"/>
</dbReference>
<dbReference type="GO" id="GO:0006508">
    <property type="term" value="P:proteolysis"/>
    <property type="evidence" value="ECO:0007669"/>
    <property type="project" value="UniProtKB-KW"/>
</dbReference>
<dbReference type="CDD" id="cd07327">
    <property type="entry name" value="M48B_HtpX_like"/>
    <property type="match status" value="1"/>
</dbReference>
<dbReference type="Gene3D" id="3.30.2010.10">
    <property type="entry name" value="Metalloproteases ('zincins'), catalytic domain"/>
    <property type="match status" value="1"/>
</dbReference>
<dbReference type="HAMAP" id="MF_00188">
    <property type="entry name" value="Pept_M48_protease_HtpX"/>
    <property type="match status" value="1"/>
</dbReference>
<dbReference type="InterPro" id="IPR050083">
    <property type="entry name" value="HtpX_protease"/>
</dbReference>
<dbReference type="InterPro" id="IPR022919">
    <property type="entry name" value="Pept_M48_protease_HtpX"/>
</dbReference>
<dbReference type="InterPro" id="IPR001915">
    <property type="entry name" value="Peptidase_M48"/>
</dbReference>
<dbReference type="NCBIfam" id="NF002669">
    <property type="entry name" value="PRK02391.1"/>
    <property type="match status" value="1"/>
</dbReference>
<dbReference type="PANTHER" id="PTHR43221">
    <property type="entry name" value="PROTEASE HTPX"/>
    <property type="match status" value="1"/>
</dbReference>
<dbReference type="PANTHER" id="PTHR43221:SF2">
    <property type="entry name" value="PROTEASE HTPX HOMOLOG"/>
    <property type="match status" value="1"/>
</dbReference>
<dbReference type="Pfam" id="PF01435">
    <property type="entry name" value="Peptidase_M48"/>
    <property type="match status" value="1"/>
</dbReference>
<sequence>MQSRFRSDRRLTVRMGVTLFLLGLLYVGFVAALIALLKSWVLVVVIVALVFGAQYWFSDRIALFAMRGRVVEREEYPELHGVVDRLAAMADMPKPVVAVSEMEMPNAFATGRNPDNAVVCVTTGLLRRLEPAELEGVLAHELSHVAHKDVAVITVASFLGVIAGLIVRFAFYSQLFGGRRDQNTLAVLAVVMGVSAAVYALSFLLIRALSRYRELAADRAAALLTGRPSALAAALTKVTGDIARIPTKDLRTAQAFNAFYFTPAFGSDPGLGRFFATHPSLEQRLDQLGRISTELGEAPAPGKA</sequence>
<proteinExistence type="inferred from homology"/>
<reference key="1">
    <citation type="journal article" date="2002" name="Nature">
        <title>Complete genome sequence of the model actinomycete Streptomyces coelicolor A3(2).</title>
        <authorList>
            <person name="Bentley S.D."/>
            <person name="Chater K.F."/>
            <person name="Cerdeno-Tarraga A.-M."/>
            <person name="Challis G.L."/>
            <person name="Thomson N.R."/>
            <person name="James K.D."/>
            <person name="Harris D.E."/>
            <person name="Quail M.A."/>
            <person name="Kieser H."/>
            <person name="Harper D."/>
            <person name="Bateman A."/>
            <person name="Brown S."/>
            <person name="Chandra G."/>
            <person name="Chen C.W."/>
            <person name="Collins M."/>
            <person name="Cronin A."/>
            <person name="Fraser A."/>
            <person name="Goble A."/>
            <person name="Hidalgo J."/>
            <person name="Hornsby T."/>
            <person name="Howarth S."/>
            <person name="Huang C.-H."/>
            <person name="Kieser T."/>
            <person name="Larke L."/>
            <person name="Murphy L.D."/>
            <person name="Oliver K."/>
            <person name="O'Neil S."/>
            <person name="Rabbinowitsch E."/>
            <person name="Rajandream M.A."/>
            <person name="Rutherford K.M."/>
            <person name="Rutter S."/>
            <person name="Seeger K."/>
            <person name="Saunders D."/>
            <person name="Sharp S."/>
            <person name="Squares R."/>
            <person name="Squares S."/>
            <person name="Taylor K."/>
            <person name="Warren T."/>
            <person name="Wietzorrek A."/>
            <person name="Woodward J.R."/>
            <person name="Barrell B.G."/>
            <person name="Parkhill J."/>
            <person name="Hopwood D.A."/>
        </authorList>
    </citation>
    <scope>NUCLEOTIDE SEQUENCE [LARGE SCALE GENOMIC DNA]</scope>
    <source>
        <strain>ATCC BAA-471 / A3(2) / M145</strain>
    </source>
</reference>
<protein>
    <recommendedName>
        <fullName evidence="1">Protease HtpX homolog 1</fullName>
        <ecNumber evidence="1">3.4.24.-</ecNumber>
    </recommendedName>
</protein>
<evidence type="ECO:0000255" key="1">
    <source>
        <dbReference type="HAMAP-Rule" id="MF_00188"/>
    </source>
</evidence>
<gene>
    <name evidence="1" type="primary">htpX1</name>
    <name type="ordered locus">SCO2202</name>
    <name type="ORF">SC3H12.10</name>
    <name type="ORF">SCC78.03</name>
</gene>
<comment type="cofactor">
    <cofactor evidence="1">
        <name>Zn(2+)</name>
        <dbReference type="ChEBI" id="CHEBI:29105"/>
    </cofactor>
    <text evidence="1">Binds 1 zinc ion per subunit.</text>
</comment>
<comment type="subcellular location">
    <subcellularLocation>
        <location evidence="1">Cell membrane</location>
        <topology evidence="1">Multi-pass membrane protein</topology>
    </subcellularLocation>
</comment>
<comment type="similarity">
    <text evidence="1">Belongs to the peptidase M48B family.</text>
</comment>